<accession>Q8GYP5</accession>
<accession>D2CFP9</accession>
<accession>Q3E6Y6</accession>
<accession>Q9FRQ8</accession>
<accession>Q9SBG0</accession>
<gene>
    <name evidence="14" type="primary">MYB60</name>
    <name evidence="16" type="ordered locus">At1g08810</name>
    <name evidence="17" type="ORF">F22O13.30</name>
</gene>
<sequence length="280" mass="32017">MGRPPCCDKIGIKKGPWTPEEDIILVSYIQEHGPGNWRSVPTNTGLLRCSKSCRLRWTNYLRPGIKRGNFTPHEEGMIIHLQALLGNKWASIASYLPQRTDNDIKNYWNTHLKKKLNKSDSDERSRSENIALQTSSTRNTINHRSTYASSTENISRLLEGWMRASPKSSTSTTFLEHKMQNRTNNFIDHHSDQFPYEQLQGSWEEGHSKGINGDDDQGIKNSENNNGDDVHHEDGDHEDDDDHNATPPLTFIEKWLLEETSTTGGQMEEMSHLMELSNML</sequence>
<organism>
    <name type="scientific">Arabidopsis thaliana</name>
    <name type="common">Mouse-ear cress</name>
    <dbReference type="NCBI Taxonomy" id="3702"/>
    <lineage>
        <taxon>Eukaryota</taxon>
        <taxon>Viridiplantae</taxon>
        <taxon>Streptophyta</taxon>
        <taxon>Embryophyta</taxon>
        <taxon>Tracheophyta</taxon>
        <taxon>Spermatophyta</taxon>
        <taxon>Magnoliopsida</taxon>
        <taxon>eudicotyledons</taxon>
        <taxon>Gunneridae</taxon>
        <taxon>Pentapetalae</taxon>
        <taxon>rosids</taxon>
        <taxon>malvids</taxon>
        <taxon>Brassicales</taxon>
        <taxon>Brassicaceae</taxon>
        <taxon>Camelineae</taxon>
        <taxon>Arabidopsis</taxon>
    </lineage>
</organism>
<dbReference type="EMBL" id="AF062895">
    <property type="protein sequence ID" value="AAC83617.1"/>
    <property type="molecule type" value="mRNA"/>
</dbReference>
<dbReference type="EMBL" id="DQ767951">
    <property type="protein sequence ID" value="ABG76203.1"/>
    <property type="molecule type" value="mRNA"/>
</dbReference>
<dbReference type="EMBL" id="AC003981">
    <property type="protein sequence ID" value="AAF99772.1"/>
    <property type="status" value="ALT_SEQ"/>
    <property type="molecule type" value="Genomic_DNA"/>
</dbReference>
<dbReference type="EMBL" id="CP002684">
    <property type="protein sequence ID" value="AEE28350.1"/>
    <property type="molecule type" value="Genomic_DNA"/>
</dbReference>
<dbReference type="EMBL" id="CP002684">
    <property type="protein sequence ID" value="AEE28351.1"/>
    <property type="molecule type" value="Genomic_DNA"/>
</dbReference>
<dbReference type="EMBL" id="CP002684">
    <property type="protein sequence ID" value="ANM61164.1"/>
    <property type="molecule type" value="Genomic_DNA"/>
</dbReference>
<dbReference type="EMBL" id="AK117469">
    <property type="protein sequence ID" value="BAC42133.1"/>
    <property type="molecule type" value="mRNA"/>
</dbReference>
<dbReference type="EMBL" id="AY519551">
    <property type="protein sequence ID" value="AAS10021.1"/>
    <property type="molecule type" value="mRNA"/>
</dbReference>
<dbReference type="EMBL" id="BT005074">
    <property type="protein sequence ID" value="AAO50607.1"/>
    <property type="molecule type" value="mRNA"/>
</dbReference>
<dbReference type="PIR" id="T00737">
    <property type="entry name" value="T00737"/>
</dbReference>
<dbReference type="PIR" id="T51667">
    <property type="entry name" value="T51667"/>
</dbReference>
<dbReference type="RefSeq" id="NP_001318958.1">
    <molecule id="Q8GYP5-2"/>
    <property type="nucleotide sequence ID" value="NM_001331790.1"/>
</dbReference>
<dbReference type="RefSeq" id="NP_172358.1">
    <molecule id="Q8GYP5-1"/>
    <property type="nucleotide sequence ID" value="NM_100755.3"/>
</dbReference>
<dbReference type="RefSeq" id="NP_973795.1">
    <molecule id="Q8GYP5-2"/>
    <property type="nucleotide sequence ID" value="NM_202066.1"/>
</dbReference>
<dbReference type="SMR" id="Q8GYP5"/>
<dbReference type="FunCoup" id="Q8GYP5">
    <property type="interactions" value="391"/>
</dbReference>
<dbReference type="IntAct" id="Q8GYP5">
    <property type="interactions" value="2"/>
</dbReference>
<dbReference type="STRING" id="3702.Q8GYP5"/>
<dbReference type="PaxDb" id="3702-AT1G08810.1"/>
<dbReference type="ProteomicsDB" id="178947"/>
<dbReference type="ProteomicsDB" id="191906">
    <molecule id="Q8GYP5-1"/>
</dbReference>
<dbReference type="EnsemblPlants" id="AT1G08810.1">
    <molecule id="Q8GYP5-1"/>
    <property type="protein sequence ID" value="AT1G08810.1"/>
    <property type="gene ID" value="AT1G08810"/>
</dbReference>
<dbReference type="EnsemblPlants" id="AT1G08810.2">
    <molecule id="Q8GYP5-2"/>
    <property type="protein sequence ID" value="AT1G08810.2"/>
    <property type="gene ID" value="AT1G08810"/>
</dbReference>
<dbReference type="EnsemblPlants" id="AT1G08810.3">
    <molecule id="Q8GYP5-2"/>
    <property type="protein sequence ID" value="AT1G08810.3"/>
    <property type="gene ID" value="AT1G08810"/>
</dbReference>
<dbReference type="GeneID" id="837403"/>
<dbReference type="Gramene" id="AT1G08810.1">
    <molecule id="Q8GYP5-1"/>
    <property type="protein sequence ID" value="AT1G08810.1"/>
    <property type="gene ID" value="AT1G08810"/>
</dbReference>
<dbReference type="Gramene" id="AT1G08810.2">
    <molecule id="Q8GYP5-2"/>
    <property type="protein sequence ID" value="AT1G08810.2"/>
    <property type="gene ID" value="AT1G08810"/>
</dbReference>
<dbReference type="Gramene" id="AT1G08810.3">
    <molecule id="Q8GYP5-2"/>
    <property type="protein sequence ID" value="AT1G08810.3"/>
    <property type="gene ID" value="AT1G08810"/>
</dbReference>
<dbReference type="KEGG" id="ath:AT1G08810"/>
<dbReference type="Araport" id="AT1G08810"/>
<dbReference type="TAIR" id="AT1G08810">
    <property type="gene designation" value="MYB60"/>
</dbReference>
<dbReference type="eggNOG" id="KOG0048">
    <property type="taxonomic scope" value="Eukaryota"/>
</dbReference>
<dbReference type="HOGENOM" id="CLU_028567_6_0_1"/>
<dbReference type="InParanoid" id="Q8GYP5"/>
<dbReference type="OMA" id="HHNATPP"/>
<dbReference type="OrthoDB" id="2143914at2759"/>
<dbReference type="PhylomeDB" id="Q8GYP5"/>
<dbReference type="PRO" id="PR:Q8GYP5"/>
<dbReference type="Proteomes" id="UP000006548">
    <property type="component" value="Chromosome 1"/>
</dbReference>
<dbReference type="ExpressionAtlas" id="Q8GYP5">
    <property type="expression patterns" value="baseline and differential"/>
</dbReference>
<dbReference type="GO" id="GO:0005634">
    <property type="term" value="C:nucleus"/>
    <property type="evidence" value="ECO:0000314"/>
    <property type="project" value="UniProtKB"/>
</dbReference>
<dbReference type="GO" id="GO:0003700">
    <property type="term" value="F:DNA-binding transcription factor activity"/>
    <property type="evidence" value="ECO:0000250"/>
    <property type="project" value="TAIR"/>
</dbReference>
<dbReference type="GO" id="GO:0000976">
    <property type="term" value="F:transcription cis-regulatory region binding"/>
    <property type="evidence" value="ECO:0000353"/>
    <property type="project" value="TAIR"/>
</dbReference>
<dbReference type="GO" id="GO:0080148">
    <property type="term" value="P:negative regulation of response to water deprivation"/>
    <property type="evidence" value="ECO:0000315"/>
    <property type="project" value="UniProtKB"/>
</dbReference>
<dbReference type="GO" id="GO:0009737">
    <property type="term" value="P:response to abscisic acid"/>
    <property type="evidence" value="ECO:0000315"/>
    <property type="project" value="TAIR"/>
</dbReference>
<dbReference type="GO" id="GO:0009646">
    <property type="term" value="P:response to absence of light"/>
    <property type="evidence" value="ECO:0000270"/>
    <property type="project" value="UniProtKB"/>
</dbReference>
<dbReference type="GO" id="GO:0009733">
    <property type="term" value="P:response to auxin"/>
    <property type="evidence" value="ECO:0000270"/>
    <property type="project" value="UniProtKB"/>
</dbReference>
<dbReference type="GO" id="GO:0009637">
    <property type="term" value="P:response to blue light"/>
    <property type="evidence" value="ECO:0000270"/>
    <property type="project" value="UniProtKB"/>
</dbReference>
<dbReference type="GO" id="GO:0009409">
    <property type="term" value="P:response to cold"/>
    <property type="evidence" value="ECO:0000270"/>
    <property type="project" value="UniProtKB"/>
</dbReference>
<dbReference type="GO" id="GO:0009416">
    <property type="term" value="P:response to light stimulus"/>
    <property type="evidence" value="ECO:0000270"/>
    <property type="project" value="UniProtKB"/>
</dbReference>
<dbReference type="GO" id="GO:1902074">
    <property type="term" value="P:response to salt"/>
    <property type="evidence" value="ECO:0000270"/>
    <property type="project" value="UniProtKB"/>
</dbReference>
<dbReference type="GO" id="GO:0009744">
    <property type="term" value="P:response to sucrose"/>
    <property type="evidence" value="ECO:0000270"/>
    <property type="project" value="UniProtKB"/>
</dbReference>
<dbReference type="GO" id="GO:0009411">
    <property type="term" value="P:response to UV"/>
    <property type="evidence" value="ECO:0000270"/>
    <property type="project" value="UniProtKB"/>
</dbReference>
<dbReference type="GO" id="GO:0009414">
    <property type="term" value="P:response to water deprivation"/>
    <property type="evidence" value="ECO:0000270"/>
    <property type="project" value="TAIR"/>
</dbReference>
<dbReference type="GO" id="GO:0010118">
    <property type="term" value="P:stomatal movement"/>
    <property type="evidence" value="ECO:0000315"/>
    <property type="project" value="TAIR"/>
</dbReference>
<dbReference type="CDD" id="cd00167">
    <property type="entry name" value="SANT"/>
    <property type="match status" value="2"/>
</dbReference>
<dbReference type="FunFam" id="1.10.10.60:FF:000001">
    <property type="entry name" value="MYB-related transcription factor"/>
    <property type="match status" value="1"/>
</dbReference>
<dbReference type="FunFam" id="1.10.10.60:FF:000368">
    <property type="entry name" value="Transcription factor MYB60"/>
    <property type="match status" value="1"/>
</dbReference>
<dbReference type="Gene3D" id="1.10.10.60">
    <property type="entry name" value="Homeodomain-like"/>
    <property type="match status" value="2"/>
</dbReference>
<dbReference type="InterPro" id="IPR009057">
    <property type="entry name" value="Homeodomain-like_sf"/>
</dbReference>
<dbReference type="InterPro" id="IPR017930">
    <property type="entry name" value="Myb_dom"/>
</dbReference>
<dbReference type="InterPro" id="IPR015495">
    <property type="entry name" value="Myb_TF_plants"/>
</dbReference>
<dbReference type="InterPro" id="IPR001005">
    <property type="entry name" value="SANT/Myb"/>
</dbReference>
<dbReference type="PANTHER" id="PTHR10641">
    <property type="entry name" value="MYB FAMILY TRANSCRIPTION FACTOR"/>
    <property type="match status" value="1"/>
</dbReference>
<dbReference type="PANTHER" id="PTHR10641:SF1152">
    <property type="entry name" value="TRANSCRIPTION FACTOR MYB60"/>
    <property type="match status" value="1"/>
</dbReference>
<dbReference type="Pfam" id="PF00249">
    <property type="entry name" value="Myb_DNA-binding"/>
    <property type="match status" value="2"/>
</dbReference>
<dbReference type="SMART" id="SM00717">
    <property type="entry name" value="SANT"/>
    <property type="match status" value="2"/>
</dbReference>
<dbReference type="SUPFAM" id="SSF46689">
    <property type="entry name" value="Homeodomain-like"/>
    <property type="match status" value="1"/>
</dbReference>
<dbReference type="PROSITE" id="PS51294">
    <property type="entry name" value="HTH_MYB"/>
    <property type="match status" value="2"/>
</dbReference>
<proteinExistence type="evidence at protein level"/>
<keyword id="KW-0025">Alternative splicing</keyword>
<keyword id="KW-0238">DNA-binding</keyword>
<keyword id="KW-0539">Nucleus</keyword>
<keyword id="KW-1185">Reference proteome</keyword>
<keyword id="KW-0677">Repeat</keyword>
<keyword id="KW-0702">S-nitrosylation</keyword>
<keyword id="KW-0804">Transcription</keyword>
<keyword id="KW-0805">Transcription regulation</keyword>
<feature type="chain" id="PRO_0000446251" description="Transcription factor MYB60">
    <location>
        <begin position="1"/>
        <end position="280"/>
    </location>
</feature>
<feature type="domain" description="HTH myb-type 1" evidence="2">
    <location>
        <begin position="9"/>
        <end position="65"/>
    </location>
</feature>
<feature type="domain" description="HTH myb-type 2" evidence="2">
    <location>
        <begin position="66"/>
        <end position="116"/>
    </location>
</feature>
<feature type="DNA-binding region" description="H-T-H motif" evidence="2">
    <location>
        <begin position="37"/>
        <end position="61"/>
    </location>
</feature>
<feature type="DNA-binding region" description="H-T-H motif" evidence="2">
    <location>
        <begin position="89"/>
        <end position="112"/>
    </location>
</feature>
<feature type="region of interest" description="Disordered" evidence="3">
    <location>
        <begin position="118"/>
        <end position="149"/>
    </location>
</feature>
<feature type="region of interest" description="Disordered" evidence="3">
    <location>
        <begin position="204"/>
        <end position="247"/>
    </location>
</feature>
<feature type="compositionally biased region" description="Basic and acidic residues" evidence="3">
    <location>
        <begin position="118"/>
        <end position="127"/>
    </location>
</feature>
<feature type="compositionally biased region" description="Polar residues" evidence="3">
    <location>
        <begin position="128"/>
        <end position="149"/>
    </location>
</feature>
<feature type="modified residue" description="S-nitrosocysteine" evidence="1">
    <location>
        <position position="49"/>
    </location>
</feature>
<feature type="modified residue" description="S-nitrosocysteine" evidence="1">
    <location>
        <position position="53"/>
    </location>
</feature>
<feature type="splice variant" id="VSP_060033" description="In isoform 2.">
    <original>MGRPPCCDKIGIKKGPWTPEEDIILVSYIQEHGPGNWRSVPTNTGLLRCSKSCRLRWTNYLRPGIKRGNFTPHEEGMIIHLQALLGNK</original>
    <variation>MVVVR</variation>
    <location>
        <begin position="1"/>
        <end position="88"/>
    </location>
</feature>
<feature type="sequence conflict" description="In Ref. 2; ABG76203." evidence="15" ref="2">
    <original>G</original>
    <variation>P</variation>
    <location>
        <position position="2"/>
    </location>
</feature>
<feature type="sequence conflict" description="In Ref. 2; ABG76203." evidence="15" ref="2">
    <original>E</original>
    <variation>D</variation>
    <location>
        <position position="21"/>
    </location>
</feature>
<feature type="sequence conflict" description="In Ref. 1; AAC83617." evidence="15" ref="1">
    <original>L</original>
    <variation>V</variation>
    <location>
        <position position="158"/>
    </location>
</feature>
<feature type="sequence conflict" description="In Ref. 2; ABG76203." evidence="15" ref="2">
    <original>F</original>
    <variation>L</variation>
    <location>
        <position position="186"/>
    </location>
</feature>
<feature type="sequence conflict" description="In Ref. 1; AAC83617." evidence="15" ref="1">
    <original>W</original>
    <variation>R</variation>
    <location>
        <position position="203"/>
    </location>
</feature>
<feature type="sequence conflict" description="In Ref. 2; ABG76203." evidence="15" ref="2">
    <original>M</original>
    <variation>V</variation>
    <location>
        <position position="267"/>
    </location>
</feature>
<reference key="1">
    <citation type="journal article" date="1998" name="Plant J.">
        <title>Towards functional characterisation of the members of the R2R3-MYB gene family from Arabidopsis thaliana.</title>
        <authorList>
            <person name="Kranz H.D."/>
            <person name="Denekamp M."/>
            <person name="Greco R."/>
            <person name="Jin H.-L."/>
            <person name="Leyva A."/>
            <person name="Meissner R.C."/>
            <person name="Petroni K."/>
            <person name="Urzainqui A."/>
            <person name="Bevan M."/>
            <person name="Martin C."/>
            <person name="Smeekens S."/>
            <person name="Tonelli C."/>
            <person name="Paz-Ares J."/>
            <person name="Weisshaar B."/>
        </authorList>
    </citation>
    <scope>NUCLEOTIDE SEQUENCE [MRNA] (ISOFORM 1)</scope>
    <scope>INDUCTION BY AUXIN; LIGHT; UV-LIGHT AND COLD</scope>
    <scope>GENE FAMILY</scope>
    <scope>NOMENCLATURE</scope>
    <source>
        <strain>cv. Columbia</strain>
    </source>
</reference>
<reference key="2">
    <citation type="journal article" date="2008" name="Plant Cell Rep.">
        <title>Arabidopsis R2R3-MYB transcription factor AtMYB60 functions as a transcriptional repressor of anthocyanin biosynthesis in lettuce (Lactuca sativa).</title>
        <authorList>
            <person name="Park J.-S."/>
            <person name="Kim J.-B."/>
            <person name="Cho K.-J."/>
            <person name="Cheon C.-I."/>
            <person name="Sung M.-K."/>
            <person name="Choung M.-G."/>
            <person name="Roh K.-H."/>
        </authorList>
    </citation>
    <scope>NUCLEOTIDE SEQUENCE [MRNA] (ISOFORM 1)</scope>
    <scope>BIOTECHNOLOGY</scope>
</reference>
<reference key="3">
    <citation type="journal article" date="2000" name="Nature">
        <title>Sequence and analysis of chromosome 1 of the plant Arabidopsis thaliana.</title>
        <authorList>
            <person name="Theologis A."/>
            <person name="Ecker J.R."/>
            <person name="Palm C.J."/>
            <person name="Federspiel N.A."/>
            <person name="Kaul S."/>
            <person name="White O."/>
            <person name="Alonso J."/>
            <person name="Altafi H."/>
            <person name="Araujo R."/>
            <person name="Bowman C.L."/>
            <person name="Brooks S.Y."/>
            <person name="Buehler E."/>
            <person name="Chan A."/>
            <person name="Chao Q."/>
            <person name="Chen H."/>
            <person name="Cheuk R.F."/>
            <person name="Chin C.W."/>
            <person name="Chung M.K."/>
            <person name="Conn L."/>
            <person name="Conway A.B."/>
            <person name="Conway A.R."/>
            <person name="Creasy T.H."/>
            <person name="Dewar K."/>
            <person name="Dunn P."/>
            <person name="Etgu P."/>
            <person name="Feldblyum T.V."/>
            <person name="Feng J.-D."/>
            <person name="Fong B."/>
            <person name="Fujii C.Y."/>
            <person name="Gill J.E."/>
            <person name="Goldsmith A.D."/>
            <person name="Haas B."/>
            <person name="Hansen N.F."/>
            <person name="Hughes B."/>
            <person name="Huizar L."/>
            <person name="Hunter J.L."/>
            <person name="Jenkins J."/>
            <person name="Johnson-Hopson C."/>
            <person name="Khan S."/>
            <person name="Khaykin E."/>
            <person name="Kim C.J."/>
            <person name="Koo H.L."/>
            <person name="Kremenetskaia I."/>
            <person name="Kurtz D.B."/>
            <person name="Kwan A."/>
            <person name="Lam B."/>
            <person name="Langin-Hooper S."/>
            <person name="Lee A."/>
            <person name="Lee J.M."/>
            <person name="Lenz C.A."/>
            <person name="Li J.H."/>
            <person name="Li Y.-P."/>
            <person name="Lin X."/>
            <person name="Liu S.X."/>
            <person name="Liu Z.A."/>
            <person name="Luros J.S."/>
            <person name="Maiti R."/>
            <person name="Marziali A."/>
            <person name="Militscher J."/>
            <person name="Miranda M."/>
            <person name="Nguyen M."/>
            <person name="Nierman W.C."/>
            <person name="Osborne B.I."/>
            <person name="Pai G."/>
            <person name="Peterson J."/>
            <person name="Pham P.K."/>
            <person name="Rizzo M."/>
            <person name="Rooney T."/>
            <person name="Rowley D."/>
            <person name="Sakano H."/>
            <person name="Salzberg S.L."/>
            <person name="Schwartz J.R."/>
            <person name="Shinn P."/>
            <person name="Southwick A.M."/>
            <person name="Sun H."/>
            <person name="Tallon L.J."/>
            <person name="Tambunga G."/>
            <person name="Toriumi M.J."/>
            <person name="Town C.D."/>
            <person name="Utterback T."/>
            <person name="Van Aken S."/>
            <person name="Vaysberg M."/>
            <person name="Vysotskaia V.S."/>
            <person name="Walker M."/>
            <person name="Wu D."/>
            <person name="Yu G."/>
            <person name="Fraser C.M."/>
            <person name="Venter J.C."/>
            <person name="Davis R.W."/>
        </authorList>
    </citation>
    <scope>NUCLEOTIDE SEQUENCE [LARGE SCALE GENOMIC DNA]</scope>
    <source>
        <strain>cv. Columbia</strain>
    </source>
</reference>
<reference key="4">
    <citation type="journal article" date="2017" name="Plant J.">
        <title>Araport11: a complete reannotation of the Arabidopsis thaliana reference genome.</title>
        <authorList>
            <person name="Cheng C.Y."/>
            <person name="Krishnakumar V."/>
            <person name="Chan A.P."/>
            <person name="Thibaud-Nissen F."/>
            <person name="Schobel S."/>
            <person name="Town C.D."/>
        </authorList>
    </citation>
    <scope>GENOME REANNOTATION</scope>
    <source>
        <strain>cv. Columbia</strain>
    </source>
</reference>
<reference key="5">
    <citation type="journal article" date="2002" name="Science">
        <title>Functional annotation of a full-length Arabidopsis cDNA collection.</title>
        <authorList>
            <person name="Seki M."/>
            <person name="Narusaka M."/>
            <person name="Kamiya A."/>
            <person name="Ishida J."/>
            <person name="Satou M."/>
            <person name="Sakurai T."/>
            <person name="Nakajima M."/>
            <person name="Enju A."/>
            <person name="Akiyama K."/>
            <person name="Oono Y."/>
            <person name="Muramatsu M."/>
            <person name="Hayashizaki Y."/>
            <person name="Kawai J."/>
            <person name="Carninci P."/>
            <person name="Itoh M."/>
            <person name="Ishii Y."/>
            <person name="Arakawa T."/>
            <person name="Shibata K."/>
            <person name="Shinagawa A."/>
            <person name="Shinozaki K."/>
        </authorList>
    </citation>
    <scope>NUCLEOTIDE SEQUENCE [LARGE SCALE MRNA] (ISOFORM 1)</scope>
    <source>
        <strain>cv. Columbia</strain>
    </source>
</reference>
<reference key="6">
    <citation type="submission" date="2004-01" db="EMBL/GenBank/DDBJ databases">
        <title>The MYB transcription factor family in Arabidopsis: a genome-wide cloning and expression pattern analysis.</title>
        <authorList>
            <person name="Qu L.-J."/>
            <person name="Gu H."/>
        </authorList>
    </citation>
    <scope>NUCLEOTIDE SEQUENCE [LARGE SCALE MRNA] (ISOFORM 1)</scope>
</reference>
<reference key="7">
    <citation type="journal article" date="2003" name="Science">
        <title>Empirical analysis of transcriptional activity in the Arabidopsis genome.</title>
        <authorList>
            <person name="Yamada K."/>
            <person name="Lim J."/>
            <person name="Dale J.M."/>
            <person name="Chen H."/>
            <person name="Shinn P."/>
            <person name="Palm C.J."/>
            <person name="Southwick A.M."/>
            <person name="Wu H.C."/>
            <person name="Kim C.J."/>
            <person name="Nguyen M."/>
            <person name="Pham P.K."/>
            <person name="Cheuk R.F."/>
            <person name="Karlin-Newmann G."/>
            <person name="Liu S.X."/>
            <person name="Lam B."/>
            <person name="Sakano H."/>
            <person name="Wu T."/>
            <person name="Yu G."/>
            <person name="Miranda M."/>
            <person name="Quach H.L."/>
            <person name="Tripp M."/>
            <person name="Chang C.H."/>
            <person name="Lee J.M."/>
            <person name="Toriumi M.J."/>
            <person name="Chan M.M."/>
            <person name="Tang C.C."/>
            <person name="Onodera C.S."/>
            <person name="Deng J.M."/>
            <person name="Akiyama K."/>
            <person name="Ansari Y."/>
            <person name="Arakawa T."/>
            <person name="Banh J."/>
            <person name="Banno F."/>
            <person name="Bowser L."/>
            <person name="Brooks S.Y."/>
            <person name="Carninci P."/>
            <person name="Chao Q."/>
            <person name="Choy N."/>
            <person name="Enju A."/>
            <person name="Goldsmith A.D."/>
            <person name="Gurjal M."/>
            <person name="Hansen N.F."/>
            <person name="Hayashizaki Y."/>
            <person name="Johnson-Hopson C."/>
            <person name="Hsuan V.W."/>
            <person name="Iida K."/>
            <person name="Karnes M."/>
            <person name="Khan S."/>
            <person name="Koesema E."/>
            <person name="Ishida J."/>
            <person name="Jiang P.X."/>
            <person name="Jones T."/>
            <person name="Kawai J."/>
            <person name="Kamiya A."/>
            <person name="Meyers C."/>
            <person name="Nakajima M."/>
            <person name="Narusaka M."/>
            <person name="Seki M."/>
            <person name="Sakurai T."/>
            <person name="Satou M."/>
            <person name="Tamse R."/>
            <person name="Vaysberg M."/>
            <person name="Wallender E.K."/>
            <person name="Wong C."/>
            <person name="Yamamura Y."/>
            <person name="Yuan S."/>
            <person name="Shinozaki K."/>
            <person name="Davis R.W."/>
            <person name="Theologis A."/>
            <person name="Ecker J.R."/>
        </authorList>
    </citation>
    <scope>NUCLEOTIDE SEQUENCE [LARGE SCALE MRNA] (ISOFORM 1)</scope>
    <source>
        <strain>cv. Columbia</strain>
    </source>
</reference>
<reference key="8">
    <citation type="journal article" date="2001" name="Curr. Opin. Plant Biol.">
        <title>The R2R3-MYB gene family in Arabidopsis thaliana.</title>
        <authorList>
            <person name="Stracke R."/>
            <person name="Werber M."/>
            <person name="Weisshaar B."/>
        </authorList>
    </citation>
    <scope>GENE FAMILY</scope>
    <scope>NOMENCLATURE</scope>
</reference>
<reference key="9">
    <citation type="journal article" date="2005" name="Curr. Biol.">
        <title>A guard-cell-specific MYB transcription factor regulates stomatal movements and plant drought tolerance.</title>
        <authorList>
            <person name="Cominelli E."/>
            <person name="Galbiati M."/>
            <person name="Vavasseur A."/>
            <person name="Conti L."/>
            <person name="Sala T."/>
            <person name="Vuylsteke M."/>
            <person name="Leonhardt N."/>
            <person name="Dellaporta S.L."/>
            <person name="Tonelli C."/>
        </authorList>
    </citation>
    <scope>FUNCTION</scope>
    <scope>DISRUPTION PHENOTYPE</scope>
    <scope>TISSUE SPECIFICITY</scope>
    <scope>REPRESSION BY DROUGHT; ABSCISIC ACID AND BLUE LIGHT</scope>
    <scope>INDUCTION BY WHITE LIGHT</scope>
</reference>
<reference key="10">
    <citation type="journal article" date="2006" name="Plant Mol. Biol.">
        <title>The MYB transcription factor superfamily of Arabidopsis: expression analysis and phylogenetic comparison with the rice MYB family.</title>
        <authorList>
            <person name="Chen Y."/>
            <person name="Yang X."/>
            <person name="He K."/>
            <person name="Liu M."/>
            <person name="Li J."/>
            <person name="Gao Z."/>
            <person name="Lin Z."/>
            <person name="Zhang Y."/>
            <person name="Wang X."/>
            <person name="Qiu X."/>
            <person name="Shen Y."/>
            <person name="Zhang L."/>
            <person name="Deng X."/>
            <person name="Luo J."/>
            <person name="Deng X.-W."/>
            <person name="Chen Z."/>
            <person name="Gu H."/>
            <person name="Qu L.-J."/>
        </authorList>
    </citation>
    <scope>INDUCTION BY JASMONIC ACID AND SALICYLIC ACID</scope>
    <scope>GENE FAMILY</scope>
    <scope>NOMENCLATURE</scope>
</reference>
<reference key="11">
    <citation type="journal article" date="2008" name="Plant J.">
        <title>Gene trap lines identify Arabidopsis genes expressed in stomatal guard cells.</title>
        <authorList>
            <person name="Galbiati M."/>
            <person name="Simoni L."/>
            <person name="Pavesi G."/>
            <person name="Cominelli E."/>
            <person name="Francia P."/>
            <person name="Vavasseur A."/>
            <person name="Nelson T."/>
            <person name="Bevan M."/>
            <person name="Tonelli C."/>
        </authorList>
    </citation>
    <scope>TISSUE SPECIFICITY</scope>
</reference>
<reference key="12">
    <citation type="journal article" date="2011" name="BMC Plant Biol.">
        <title>DOF-binding sites additively contribute to guard cell-specificity of AtMYB60 promoter.</title>
        <authorList>
            <person name="Cominelli E."/>
            <person name="Galbiati M."/>
            <person name="Albertini A."/>
            <person name="Fornara F."/>
            <person name="Conti L."/>
            <person name="Coupland G."/>
            <person name="Tonelli C."/>
        </authorList>
    </citation>
    <scope>TISSUE SPECIFICITY</scope>
    <source>
        <strain>cv. Columbia</strain>
    </source>
</reference>
<reference key="13">
    <citation type="journal article" date="2011" name="Plant Mol. Biol.">
        <title>A dual role for MYB60 in stomatal regulation and root growth of Arabidopsis thaliana under drought stress.</title>
        <authorList>
            <person name="Oh J.E."/>
            <person name="Kwon Y."/>
            <person name="Kim J.H."/>
            <person name="Noh H."/>
            <person name="Hong S.-W."/>
            <person name="Lee H."/>
        </authorList>
    </citation>
    <scope>FUNCTION</scope>
    <scope>ALTERNATIVE SPLICING</scope>
    <scope>SUBCELLULAR LOCATION</scope>
    <scope>INDUCTION BY ABSCISIC ACID; SUCROSE AND AUXIN</scope>
    <source>
        <strain>cv. Columbia</strain>
    </source>
</reference>
<reference key="14">
    <citation type="journal article" date="2013" name="Curr. Biol.">
        <title>A Dof transcription factor, SCAP1, is essential for the development of functional stomata in Arabidopsis.</title>
        <authorList>
            <person name="Negi J."/>
            <person name="Moriwaki K."/>
            <person name="Konishi M."/>
            <person name="Yokoyama R."/>
            <person name="Nakano T."/>
            <person name="Kusumi K."/>
            <person name="Hashimoto-Sugimoto M."/>
            <person name="Schroeder J.I."/>
            <person name="Nishitani K."/>
            <person name="Yanagisawa S."/>
            <person name="Iba K."/>
        </authorList>
    </citation>
    <scope>INDUCTION BY SCAP1</scope>
</reference>
<reference key="15">
    <citation type="journal article" date="2013" name="J. Exp. Bot.">
        <title>The Arabidopsis thaliana MYB60 promoter provides a tool for the spatio-temporal control of gene expression in stomatal guard cells.</title>
        <authorList>
            <person name="Rusconi F."/>
            <person name="Simeoni F."/>
            <person name="Francia P."/>
            <person name="Cominelli E."/>
            <person name="Conti L."/>
            <person name="Riboni M."/>
            <person name="Simoni L."/>
            <person name="Martin C.R."/>
            <person name="Tonelli C."/>
            <person name="Galbiati M."/>
        </authorList>
    </citation>
    <scope>TISSUE SPECIFICITY</scope>
    <scope>REPRESSION BY ABSCISIC ACID</scope>
    <scope>BIOTECHNOLOGY</scope>
    <source>
        <strain>cv. Columbia</strain>
    </source>
</reference>
<name>MYB60_ARATH</name>
<evidence type="ECO:0000250" key="1">
    <source>
        <dbReference type="UniProtKB" id="Q9SCU7"/>
    </source>
</evidence>
<evidence type="ECO:0000255" key="2">
    <source>
        <dbReference type="PROSITE-ProRule" id="PRU00625"/>
    </source>
</evidence>
<evidence type="ECO:0000256" key="3">
    <source>
        <dbReference type="SAM" id="MobiDB-lite"/>
    </source>
</evidence>
<evidence type="ECO:0000269" key="4">
    <source>
    </source>
</evidence>
<evidence type="ECO:0000269" key="5">
    <source>
    </source>
</evidence>
<evidence type="ECO:0000269" key="6">
    <source>
    </source>
</evidence>
<evidence type="ECO:0000269" key="7">
    <source>
    </source>
</evidence>
<evidence type="ECO:0000269" key="8">
    <source>
    </source>
</evidence>
<evidence type="ECO:0000269" key="9">
    <source>
    </source>
</evidence>
<evidence type="ECO:0000269" key="10">
    <source>
    </source>
</evidence>
<evidence type="ECO:0000269" key="11">
    <source>
    </source>
</evidence>
<evidence type="ECO:0000269" key="12">
    <source>
    </source>
</evidence>
<evidence type="ECO:0000303" key="13">
    <source>
    </source>
</evidence>
<evidence type="ECO:0000303" key="14">
    <source>
    </source>
</evidence>
<evidence type="ECO:0000305" key="15"/>
<evidence type="ECO:0000312" key="16">
    <source>
        <dbReference type="Araport" id="AT1G08810"/>
    </source>
</evidence>
<evidence type="ECO:0000312" key="17">
    <source>
        <dbReference type="EMBL" id="AAF99772.1"/>
    </source>
</evidence>
<comment type="function">
    <text evidence="4 8">Transcription factor involved in the regulation of gene (e.g. drought-regulated and flavonoid biosynthetic genes) expression and stomatal movements leading to negative regulation of responses to drought and responses to other physiological stimuli (e.g. light) (PubMed:16005291, PubMed:21637967). Promotes guard cell deflation in response to water deficit. Triggers root growth upon osmotic stress (e.g. mannitol containing medium) (PubMed:21637967).</text>
</comment>
<comment type="subcellular location">
    <molecule>Isoform 1</molecule>
    <subcellularLocation>
        <location evidence="2 8">Nucleus</location>
    </subcellularLocation>
</comment>
<comment type="subcellular location">
    <molecule>Isoform 2</molecule>
    <subcellularLocation>
        <location evidence="8">Nucleus</location>
    </subcellularLocation>
</comment>
<comment type="alternative products">
    <event type="alternative splicing"/>
    <isoform>
        <id>Q8GYP5-1</id>
        <name>1</name>
        <name evidence="13">MYB60.1</name>
        <sequence type="displayed"/>
    </isoform>
    <isoform>
        <id>Q8GYP5-2</id>
        <name>2</name>
        <name evidence="13">MYB60.2</name>
        <sequence type="described" ref="VSP_060033"/>
    </isoform>
</comment>
<comment type="tissue specificity">
    <text evidence="4 6 9 11">Specifically expressed in guard cells (PubMed:16005291, PubMed:18036199, PubMed:22088138, PubMed:23828545). Present in seedlings, leaves, stems and flowers (PubMed:16005291, PubMed:22088138).</text>
</comment>
<comment type="induction">
    <text evidence="4 5 8 10 11 12">Induced by jasmonic acid (JA) and salicylic acid (SA) (PubMed:16463103). Triggered by auxin (IAA) in roots (PubMed:21637967, PubMed:9839469). Stimulated by light, UV-light and cold (PubMed:9839469). According to PubMed:16005291 and PubMed:23828545, rapidly repressed by abscisic acid (ABA) in an ABI1-dependent manner. But in contrast, according to PubMed:21637967, transiently induced by ABA in seedlings (PubMed:16005291, PubMed:21637967, PubMed:23828545). Rapidly repressed by drought. Activated by white light, but repressed by blue light and darkness (PubMed:16005291). Transiently induced by salt (NaCl) in seedlings. Induced by sucrose (PubMed:21637967). Positively regulated by SCAP1 (PubMed:23453954).</text>
</comment>
<comment type="disruption phenotype">
    <text evidence="4">Constitutive reduction of stomatal opening and decreased wilting under water stress conditions resulting in abnormally turgid and green leaves as well as an enhanced tolerance to drought, and associated with an altered expression of some genes (e.g. ERD10, ERD13, NHL3, SYP122, VPEgamma, ERF and ZAT genes) mainly involved in response to stress. Normal stomatal closure in the dark and upon abscisic acid (ABA) exposure.</text>
</comment>
<comment type="biotechnology">
    <text evidence="7">Mediates the inhibition of anthocyanin (e.g. cyanidin and delphinidin) biosynthesis when expressed in lettuce L.sativa and could thus be used for the development of new varieties of lettuce.</text>
</comment>
<comment type="biotechnology">
    <text evidence="11">Promoter triggering guard cells-specific expression can be used in tobacco (N.tabacum) and tomato (S.lycopersicum) to monitor stomata genetic engineering.</text>
</comment>
<comment type="sequence caution" evidence="15">
    <conflict type="erroneous gene model prediction">
        <sequence resource="EMBL-CDS" id="AAF99772"/>
    </conflict>
</comment>
<protein>
    <recommendedName>
        <fullName evidence="14">Transcription factor MYB60</fullName>
    </recommendedName>
    <alternativeName>
        <fullName evidence="14">Myb domain protein 60</fullName>
        <shortName evidence="14">AtMYB60</shortName>
    </alternativeName>
</protein>